<evidence type="ECO:0000255" key="1">
    <source>
        <dbReference type="HAMAP-Rule" id="MF_01359"/>
    </source>
</evidence>
<comment type="function">
    <text evidence="1">NDH-1 shuttles electrons from NADH, via FMN and iron-sulfur (Fe-S) centers, to quinones in the respiratory chain. The immediate electron acceptor for the enzyme in this species is believed to be ubiquinone. Couples the redox reaction to proton translocation (for every two electrons transferred, four hydrogen ions are translocated across the cytoplasmic membrane), and thus conserves the redox energy in a proton gradient.</text>
</comment>
<comment type="catalytic activity">
    <reaction evidence="1">
        <text>a quinone + NADH + 5 H(+)(in) = a quinol + NAD(+) + 4 H(+)(out)</text>
        <dbReference type="Rhea" id="RHEA:57888"/>
        <dbReference type="ChEBI" id="CHEBI:15378"/>
        <dbReference type="ChEBI" id="CHEBI:24646"/>
        <dbReference type="ChEBI" id="CHEBI:57540"/>
        <dbReference type="ChEBI" id="CHEBI:57945"/>
        <dbReference type="ChEBI" id="CHEBI:132124"/>
    </reaction>
</comment>
<comment type="subunit">
    <text evidence="1">NDH-1 is composed of 13 different subunits. Subunits NuoB, CD, E, F, and G constitute the peripheral sector of the complex.</text>
</comment>
<comment type="subcellular location">
    <subcellularLocation>
        <location evidence="1">Cell inner membrane</location>
        <topology evidence="1">Peripheral membrane protein</topology>
        <orientation evidence="1">Cytoplasmic side</orientation>
    </subcellularLocation>
</comment>
<comment type="similarity">
    <text evidence="1">In the N-terminal section; belongs to the complex I 30 kDa subunit family.</text>
</comment>
<comment type="similarity">
    <text evidence="1">In the C-terminal section; belongs to the complex I 49 kDa subunit family.</text>
</comment>
<gene>
    <name evidence="1" type="primary">nuoC</name>
    <name evidence="1" type="synonym">nuoCD</name>
    <name evidence="1" type="synonym">nuoD</name>
    <name type="ordered locus">BCc_099</name>
</gene>
<reference key="1">
    <citation type="journal article" date="2006" name="Science">
        <title>A small microbial genome: the end of a long symbiotic relationship?</title>
        <authorList>
            <person name="Perez-Brocal V."/>
            <person name="Gil R."/>
            <person name="Ramos S."/>
            <person name="Lamelas A."/>
            <person name="Postigo M."/>
            <person name="Michelena J.M."/>
            <person name="Silva F.J."/>
            <person name="Moya A."/>
            <person name="Latorre A."/>
        </authorList>
    </citation>
    <scope>NUCLEOTIDE SEQUENCE [LARGE SCALE GENOMIC DNA]</scope>
    <source>
        <strain>Cc</strain>
    </source>
</reference>
<proteinExistence type="inferred from homology"/>
<accession>Q057X3</accession>
<feature type="chain" id="PRO_0000358624" description="NADH-quinone oxidoreductase subunit C/D">
    <location>
        <begin position="1"/>
        <end position="578"/>
    </location>
</feature>
<feature type="region of interest" description="NADH dehydrogenase I subunit C" evidence="1">
    <location>
        <begin position="1"/>
        <end position="167"/>
    </location>
</feature>
<feature type="region of interest" description="NADH dehydrogenase I subunit D" evidence="1">
    <location>
        <begin position="192"/>
        <end position="578"/>
    </location>
</feature>
<keyword id="KW-0997">Cell inner membrane</keyword>
<keyword id="KW-1003">Cell membrane</keyword>
<keyword id="KW-0472">Membrane</keyword>
<keyword id="KW-0511">Multifunctional enzyme</keyword>
<keyword id="KW-0520">NAD</keyword>
<keyword id="KW-0874">Quinone</keyword>
<keyword id="KW-1185">Reference proteome</keyword>
<keyword id="KW-1278">Translocase</keyword>
<keyword id="KW-0813">Transport</keyword>
<keyword id="KW-0830">Ubiquinone</keyword>
<name>NUOCD_BUCCC</name>
<organism>
    <name type="scientific">Buchnera aphidicola subsp. Cinara cedri (strain Cc)</name>
    <dbReference type="NCBI Taxonomy" id="372461"/>
    <lineage>
        <taxon>Bacteria</taxon>
        <taxon>Pseudomonadati</taxon>
        <taxon>Pseudomonadota</taxon>
        <taxon>Gammaproteobacteria</taxon>
        <taxon>Enterobacterales</taxon>
        <taxon>Erwiniaceae</taxon>
        <taxon>Buchnera</taxon>
    </lineage>
</organism>
<protein>
    <recommendedName>
        <fullName evidence="1">NADH-quinone oxidoreductase subunit C/D</fullName>
        <ecNumber evidence="1">7.1.1.-</ecNumber>
    </recommendedName>
    <alternativeName>
        <fullName evidence="1">NADH dehydrogenase I subunit C/D</fullName>
    </alternativeName>
    <alternativeName>
        <fullName evidence="1">NDH-1 subunit C/D</fullName>
    </alternativeName>
</protein>
<dbReference type="EC" id="7.1.1.-" evidence="1"/>
<dbReference type="EMBL" id="CP000263">
    <property type="protein sequence ID" value="ABJ90576.1"/>
    <property type="molecule type" value="Genomic_DNA"/>
</dbReference>
<dbReference type="RefSeq" id="WP_011672495.1">
    <property type="nucleotide sequence ID" value="NC_008513.1"/>
</dbReference>
<dbReference type="SMR" id="Q057X3"/>
<dbReference type="STRING" id="372461.BCc_099"/>
<dbReference type="KEGG" id="bcc:BCc_099"/>
<dbReference type="eggNOG" id="COG0649">
    <property type="taxonomic scope" value="Bacteria"/>
</dbReference>
<dbReference type="HOGENOM" id="CLU_015134_3_2_6"/>
<dbReference type="Proteomes" id="UP000000669">
    <property type="component" value="Chromosome"/>
</dbReference>
<dbReference type="GO" id="GO:0030964">
    <property type="term" value="C:NADH dehydrogenase complex"/>
    <property type="evidence" value="ECO:0007669"/>
    <property type="project" value="InterPro"/>
</dbReference>
<dbReference type="GO" id="GO:0005886">
    <property type="term" value="C:plasma membrane"/>
    <property type="evidence" value="ECO:0007669"/>
    <property type="project" value="UniProtKB-SubCell"/>
</dbReference>
<dbReference type="GO" id="GO:0051287">
    <property type="term" value="F:NAD binding"/>
    <property type="evidence" value="ECO:0007669"/>
    <property type="project" value="InterPro"/>
</dbReference>
<dbReference type="GO" id="GO:0008137">
    <property type="term" value="F:NADH dehydrogenase (ubiquinone) activity"/>
    <property type="evidence" value="ECO:0007669"/>
    <property type="project" value="InterPro"/>
</dbReference>
<dbReference type="GO" id="GO:0050136">
    <property type="term" value="F:NADH:ubiquinone reductase (non-electrogenic) activity"/>
    <property type="evidence" value="ECO:0007669"/>
    <property type="project" value="UniProtKB-UniRule"/>
</dbReference>
<dbReference type="GO" id="GO:0048038">
    <property type="term" value="F:quinone binding"/>
    <property type="evidence" value="ECO:0007669"/>
    <property type="project" value="UniProtKB-KW"/>
</dbReference>
<dbReference type="FunFam" id="1.10.645.10:FF:000001">
    <property type="entry name" value="NADH-quinone oxidoreductase subunit C/D"/>
    <property type="match status" value="1"/>
</dbReference>
<dbReference type="Gene3D" id="1.10.645.10">
    <property type="entry name" value="Cytochrome-c3 Hydrogenase, chain B"/>
    <property type="match status" value="1"/>
</dbReference>
<dbReference type="Gene3D" id="3.30.460.80">
    <property type="entry name" value="NADH:ubiquinone oxidoreductase, 30kDa subunit"/>
    <property type="match status" value="1"/>
</dbReference>
<dbReference type="HAMAP" id="MF_01359">
    <property type="entry name" value="NDH1_NuoCD_1"/>
    <property type="match status" value="1"/>
</dbReference>
<dbReference type="HAMAP" id="MF_01358">
    <property type="entry name" value="NDH1_NuoD"/>
    <property type="match status" value="1"/>
</dbReference>
<dbReference type="InterPro" id="IPR010218">
    <property type="entry name" value="NADH_DH_suC"/>
</dbReference>
<dbReference type="InterPro" id="IPR023062">
    <property type="entry name" value="NADH_DH_suCD"/>
</dbReference>
<dbReference type="InterPro" id="IPR001135">
    <property type="entry name" value="NADH_Q_OxRdtase_suD"/>
</dbReference>
<dbReference type="InterPro" id="IPR037232">
    <property type="entry name" value="NADH_quin_OxRdtase_su_C/D-like"/>
</dbReference>
<dbReference type="InterPro" id="IPR001268">
    <property type="entry name" value="NADH_UbQ_OxRdtase_30kDa_su"/>
</dbReference>
<dbReference type="InterPro" id="IPR014029">
    <property type="entry name" value="NADH_UbQ_OxRdtase_49kDa_CS"/>
</dbReference>
<dbReference type="InterPro" id="IPR022885">
    <property type="entry name" value="NDH1_su_D/H"/>
</dbReference>
<dbReference type="InterPro" id="IPR029014">
    <property type="entry name" value="NiFe-Hase_large"/>
</dbReference>
<dbReference type="NCBIfam" id="TIGR01961">
    <property type="entry name" value="NuoC_fam"/>
    <property type="match status" value="1"/>
</dbReference>
<dbReference type="NCBIfam" id="TIGR01962">
    <property type="entry name" value="NuoD"/>
    <property type="match status" value="1"/>
</dbReference>
<dbReference type="NCBIfam" id="NF004739">
    <property type="entry name" value="PRK06075.1"/>
    <property type="match status" value="1"/>
</dbReference>
<dbReference type="NCBIfam" id="NF008728">
    <property type="entry name" value="PRK11742.1"/>
    <property type="match status" value="1"/>
</dbReference>
<dbReference type="PANTHER" id="PTHR11993:SF45">
    <property type="entry name" value="NADH-QUINONE OXIDOREDUCTASE SUBUNIT C_D"/>
    <property type="match status" value="1"/>
</dbReference>
<dbReference type="PANTHER" id="PTHR11993">
    <property type="entry name" value="NADH-UBIQUINONE OXIDOREDUCTASE 49 KDA SUBUNIT"/>
    <property type="match status" value="1"/>
</dbReference>
<dbReference type="Pfam" id="PF00329">
    <property type="entry name" value="Complex1_30kDa"/>
    <property type="match status" value="1"/>
</dbReference>
<dbReference type="Pfam" id="PF00346">
    <property type="entry name" value="Complex1_49kDa"/>
    <property type="match status" value="1"/>
</dbReference>
<dbReference type="SUPFAM" id="SSF56762">
    <property type="entry name" value="HydB/Nqo4-like"/>
    <property type="match status" value="1"/>
</dbReference>
<dbReference type="SUPFAM" id="SSF143243">
    <property type="entry name" value="Nqo5-like"/>
    <property type="match status" value="1"/>
</dbReference>
<dbReference type="PROSITE" id="PS00535">
    <property type="entry name" value="COMPLEX1_49K"/>
    <property type="match status" value="1"/>
</dbReference>
<sequence>MILSLFKLFGKENFFIQDSYLESPILWIDSTILIQVIGFLKKNNTCSYEILFDLFGIDERTRKNVKSFPNADFTVSYYFFSISNNSDLILKVALLKEHLQLPTISSIFLNANWYEREIWDMFGIVFNNHPYLTRILMPKNWVGHPLRKDYSSHATEFDEFYFTKQKEDLAMESLKFCPKSWGLENNDSNNSEYMFLNFGPNHPSSHGAFRIVLQLHGEKIINCIPDIGYHHRGAEKIAERQTWHSYIPYTDRIEYLGGCVNEMPYILAVEKLAGIVVPEKVQVIRILLSELFRINSHLLFLSTFIQDIGSMSTVFLAFTDRQKIYDLIESITGARMHPAWFRIGGVAKDLPKNWNSLLKKFLIWMPKRLDYYVNIAIKNKILISRSKGIAAYGKKEALSWGITGAGLRATGVNFDVRKNRPYSGYQNFDFEVPIGNNISDAYTRVLLKIEEIRQSLKILNQCLLHMPLGSYKSDHPLSTPQKKNKSLFHIERMITHFLQMSWGPIIPSNESFQMIEATKGINSYYLISDGLTTSYRTRIRTPSFAHLQQIPSVIRGYVISDLIVYLGSIDFVMSDVDR</sequence>